<feature type="chain" id="PRO_0000203286" description="UPF0659 protein YMR090W">
    <location>
        <begin position="1"/>
        <end position="227"/>
    </location>
</feature>
<name>YMY0_YEAST</name>
<keyword id="KW-0963">Cytoplasm</keyword>
<keyword id="KW-1185">Reference proteome</keyword>
<accession>Q04304</accession>
<accession>D6VZR3</accession>
<comment type="subcellular location">
    <subcellularLocation>
        <location evidence="1">Cytoplasm</location>
    </subcellularLocation>
</comment>
<comment type="miscellaneous">
    <text evidence="2">Present with 704 molecules/cell in log phase SD medium.</text>
</comment>
<comment type="similarity">
    <text evidence="3">Belongs to the UPF0659 family.</text>
</comment>
<protein>
    <recommendedName>
        <fullName>UPF0659 protein YMR090W</fullName>
    </recommendedName>
</protein>
<reference key="1">
    <citation type="journal article" date="1997" name="Nature">
        <title>The nucleotide sequence of Saccharomyces cerevisiae chromosome XIII.</title>
        <authorList>
            <person name="Bowman S."/>
            <person name="Churcher C.M."/>
            <person name="Badcock K."/>
            <person name="Brown D."/>
            <person name="Chillingworth T."/>
            <person name="Connor R."/>
            <person name="Dedman K."/>
            <person name="Devlin K."/>
            <person name="Gentles S."/>
            <person name="Hamlin N."/>
            <person name="Hunt S."/>
            <person name="Jagels K."/>
            <person name="Lye G."/>
            <person name="Moule S."/>
            <person name="Odell C."/>
            <person name="Pearson D."/>
            <person name="Rajandream M.A."/>
            <person name="Rice P."/>
            <person name="Skelton J."/>
            <person name="Walsh S.V."/>
            <person name="Whitehead S."/>
            <person name="Barrell B.G."/>
        </authorList>
    </citation>
    <scope>NUCLEOTIDE SEQUENCE [LARGE SCALE GENOMIC DNA]</scope>
    <source>
        <strain>ATCC 204508 / S288c</strain>
    </source>
</reference>
<reference key="2">
    <citation type="journal article" date="2014" name="G3 (Bethesda)">
        <title>The reference genome sequence of Saccharomyces cerevisiae: Then and now.</title>
        <authorList>
            <person name="Engel S.R."/>
            <person name="Dietrich F.S."/>
            <person name="Fisk D.G."/>
            <person name="Binkley G."/>
            <person name="Balakrishnan R."/>
            <person name="Costanzo M.C."/>
            <person name="Dwight S.S."/>
            <person name="Hitz B.C."/>
            <person name="Karra K."/>
            <person name="Nash R.S."/>
            <person name="Weng S."/>
            <person name="Wong E.D."/>
            <person name="Lloyd P."/>
            <person name="Skrzypek M.S."/>
            <person name="Miyasato S.R."/>
            <person name="Simison M."/>
            <person name="Cherry J.M."/>
        </authorList>
    </citation>
    <scope>GENOME REANNOTATION</scope>
    <source>
        <strain>ATCC 204508 / S288c</strain>
    </source>
</reference>
<reference key="3">
    <citation type="journal article" date="2003" name="Nature">
        <title>Global analysis of protein localization in budding yeast.</title>
        <authorList>
            <person name="Huh W.-K."/>
            <person name="Falvo J.V."/>
            <person name="Gerke L.C."/>
            <person name="Carroll A.S."/>
            <person name="Howson R.W."/>
            <person name="Weissman J.S."/>
            <person name="O'Shea E.K."/>
        </authorList>
    </citation>
    <scope>SUBCELLULAR LOCATION [LARGE SCALE ANALYSIS]</scope>
</reference>
<reference key="4">
    <citation type="journal article" date="2003" name="Nature">
        <title>Global analysis of protein expression in yeast.</title>
        <authorList>
            <person name="Ghaemmaghami S."/>
            <person name="Huh W.-K."/>
            <person name="Bower K."/>
            <person name="Howson R.W."/>
            <person name="Belle A."/>
            <person name="Dephoure N."/>
            <person name="O'Shea E.K."/>
            <person name="Weissman J.S."/>
        </authorList>
    </citation>
    <scope>LEVEL OF PROTEIN EXPRESSION [LARGE SCALE ANALYSIS]</scope>
</reference>
<reference key="5">
    <citation type="journal article" date="2012" name="Proc. Natl. Acad. Sci. U.S.A.">
        <title>N-terminal acetylome analyses and functional insights of the N-terminal acetyltransferase NatB.</title>
        <authorList>
            <person name="Van Damme P."/>
            <person name="Lasa M."/>
            <person name="Polevoda B."/>
            <person name="Gazquez C."/>
            <person name="Elosegui-Artola A."/>
            <person name="Kim D.S."/>
            <person name="De Juan-Pardo E."/>
            <person name="Demeyer K."/>
            <person name="Hole K."/>
            <person name="Larrea E."/>
            <person name="Timmerman E."/>
            <person name="Prieto J."/>
            <person name="Arnesen T."/>
            <person name="Sherman F."/>
            <person name="Gevaert K."/>
            <person name="Aldabe R."/>
        </authorList>
    </citation>
    <scope>IDENTIFICATION BY MASS SPECTROMETRY [LARGE SCALE ANALYSIS]</scope>
</reference>
<proteinExistence type="evidence at protein level"/>
<dbReference type="EMBL" id="Z49259">
    <property type="protein sequence ID" value="CAA89237.1"/>
    <property type="molecule type" value="Genomic_DNA"/>
</dbReference>
<dbReference type="EMBL" id="BK006946">
    <property type="protein sequence ID" value="DAA09987.1"/>
    <property type="molecule type" value="Genomic_DNA"/>
</dbReference>
<dbReference type="PIR" id="S54466">
    <property type="entry name" value="S54466"/>
</dbReference>
<dbReference type="RefSeq" id="NP_013808.1">
    <property type="nucleotide sequence ID" value="NM_001182590.1"/>
</dbReference>
<dbReference type="SMR" id="Q04304"/>
<dbReference type="BioGRID" id="35265">
    <property type="interactions" value="46"/>
</dbReference>
<dbReference type="DIP" id="DIP-4443N"/>
<dbReference type="FunCoup" id="Q04304">
    <property type="interactions" value="846"/>
</dbReference>
<dbReference type="IntAct" id="Q04304">
    <property type="interactions" value="1"/>
</dbReference>
<dbReference type="STRING" id="4932.YMR090W"/>
<dbReference type="iPTMnet" id="Q04304"/>
<dbReference type="PaxDb" id="4932-YMR090W"/>
<dbReference type="PeptideAtlas" id="Q04304"/>
<dbReference type="EnsemblFungi" id="YMR090W_mRNA">
    <property type="protein sequence ID" value="YMR090W"/>
    <property type="gene ID" value="YMR090W"/>
</dbReference>
<dbReference type="GeneID" id="855115"/>
<dbReference type="KEGG" id="sce:YMR090W"/>
<dbReference type="AGR" id="SGD:S000004696"/>
<dbReference type="SGD" id="S000004696">
    <property type="gene designation" value="YMR090W"/>
</dbReference>
<dbReference type="VEuPathDB" id="FungiDB:YMR090W"/>
<dbReference type="eggNOG" id="KOG1203">
    <property type="taxonomic scope" value="Eukaryota"/>
</dbReference>
<dbReference type="GeneTree" id="ENSGT00390000014810"/>
<dbReference type="HOGENOM" id="CLU_025711_1_2_1"/>
<dbReference type="InParanoid" id="Q04304"/>
<dbReference type="OMA" id="YFKNEVG"/>
<dbReference type="OrthoDB" id="10254604at2759"/>
<dbReference type="BioCyc" id="YEAST:G3O-32790-MONOMER"/>
<dbReference type="BioGRID-ORCS" id="855115">
    <property type="hits" value="1 hit in 10 CRISPR screens"/>
</dbReference>
<dbReference type="PRO" id="PR:Q04304"/>
<dbReference type="Proteomes" id="UP000002311">
    <property type="component" value="Chromosome XIII"/>
</dbReference>
<dbReference type="RNAct" id="Q04304">
    <property type="molecule type" value="protein"/>
</dbReference>
<dbReference type="GO" id="GO:0005737">
    <property type="term" value="C:cytoplasm"/>
    <property type="evidence" value="ECO:0007005"/>
    <property type="project" value="SGD"/>
</dbReference>
<dbReference type="CDD" id="cd05243">
    <property type="entry name" value="SDR_a5"/>
    <property type="match status" value="1"/>
</dbReference>
<dbReference type="FunFam" id="3.40.50.720:FF:000767">
    <property type="entry name" value="YMR090W-like protein"/>
    <property type="match status" value="1"/>
</dbReference>
<dbReference type="Gene3D" id="3.40.50.720">
    <property type="entry name" value="NAD(P)-binding Rossmann-like Domain"/>
    <property type="match status" value="1"/>
</dbReference>
<dbReference type="InterPro" id="IPR016040">
    <property type="entry name" value="NAD(P)-bd_dom"/>
</dbReference>
<dbReference type="InterPro" id="IPR036291">
    <property type="entry name" value="NAD(P)-bd_dom_sf"/>
</dbReference>
<dbReference type="PANTHER" id="PTHR15020">
    <property type="entry name" value="FLAVIN REDUCTASE-RELATED"/>
    <property type="match status" value="1"/>
</dbReference>
<dbReference type="PANTHER" id="PTHR15020:SF50">
    <property type="entry name" value="UPF0659 PROTEIN YMR090W"/>
    <property type="match status" value="1"/>
</dbReference>
<dbReference type="Pfam" id="PF13460">
    <property type="entry name" value="NAD_binding_10"/>
    <property type="match status" value="1"/>
</dbReference>
<dbReference type="SUPFAM" id="SSF51735">
    <property type="entry name" value="NAD(P)-binding Rossmann-fold domains"/>
    <property type="match status" value="1"/>
</dbReference>
<organism>
    <name type="scientific">Saccharomyces cerevisiae (strain ATCC 204508 / S288c)</name>
    <name type="common">Baker's yeast</name>
    <dbReference type="NCBI Taxonomy" id="559292"/>
    <lineage>
        <taxon>Eukaryota</taxon>
        <taxon>Fungi</taxon>
        <taxon>Dikarya</taxon>
        <taxon>Ascomycota</taxon>
        <taxon>Saccharomycotina</taxon>
        <taxon>Saccharomycetes</taxon>
        <taxon>Saccharomycetales</taxon>
        <taxon>Saccharomycetaceae</taxon>
        <taxon>Saccharomyces</taxon>
    </lineage>
</organism>
<sequence>MSPMKVAVVGASGKVGRLLINQLKANDSFSTPLAIVRTQDQVNYFKNEVGVDASLTDIENASVSEITDAIKAYDAVVFSAGAGGKGMERIFTVDLDGCIKVVEACEKAGIKRFVVVSALKAEDRDFWYNIKGLREYYIAKRSADREVRNSNLDYTILQPGSLELNKGTGLLQPLDKLEEKASVNYSINREDVASFIVESLLHPNATVKKTISLVNGNEPMEKFIQSL</sequence>
<gene>
    <name type="ordered locus">YMR090W</name>
    <name type="ORF">YM9582.15</name>
</gene>
<evidence type="ECO:0000269" key="1">
    <source>
    </source>
</evidence>
<evidence type="ECO:0000269" key="2">
    <source>
    </source>
</evidence>
<evidence type="ECO:0000305" key="3"/>